<evidence type="ECO:0000255" key="1">
    <source>
        <dbReference type="HAMAP-Rule" id="MF_00210"/>
    </source>
</evidence>
<comment type="function">
    <text evidence="1">Catalyzes the transfer of the enolpyruvyl moiety of phosphoenolpyruvate (PEP) to the 5-hydroxyl of shikimate-3-phosphate (S3P) to produce enolpyruvyl shikimate-3-phosphate and inorganic phosphate.</text>
</comment>
<comment type="catalytic activity">
    <reaction evidence="1">
        <text>3-phosphoshikimate + phosphoenolpyruvate = 5-O-(1-carboxyvinyl)-3-phosphoshikimate + phosphate</text>
        <dbReference type="Rhea" id="RHEA:21256"/>
        <dbReference type="ChEBI" id="CHEBI:43474"/>
        <dbReference type="ChEBI" id="CHEBI:57701"/>
        <dbReference type="ChEBI" id="CHEBI:58702"/>
        <dbReference type="ChEBI" id="CHEBI:145989"/>
        <dbReference type="EC" id="2.5.1.19"/>
    </reaction>
    <physiologicalReaction direction="left-to-right" evidence="1">
        <dbReference type="Rhea" id="RHEA:21257"/>
    </physiologicalReaction>
</comment>
<comment type="pathway">
    <text evidence="1">Metabolic intermediate biosynthesis; chorismate biosynthesis; chorismate from D-erythrose 4-phosphate and phosphoenolpyruvate: step 6/7.</text>
</comment>
<comment type="subunit">
    <text evidence="1">Monomer.</text>
</comment>
<comment type="subcellular location">
    <subcellularLocation>
        <location evidence="1">Cytoplasm</location>
    </subcellularLocation>
</comment>
<comment type="similarity">
    <text evidence="1">Belongs to the EPSP synthase family.</text>
</comment>
<proteinExistence type="inferred from homology"/>
<keyword id="KW-0028">Amino-acid biosynthesis</keyword>
<keyword id="KW-0057">Aromatic amino acid biosynthesis</keyword>
<keyword id="KW-0963">Cytoplasm</keyword>
<keyword id="KW-1185">Reference proteome</keyword>
<keyword id="KW-0808">Transferase</keyword>
<organism>
    <name type="scientific">Salmonella arizonae (strain ATCC BAA-731 / CDC346-86 / RSK2980)</name>
    <dbReference type="NCBI Taxonomy" id="41514"/>
    <lineage>
        <taxon>Bacteria</taxon>
        <taxon>Pseudomonadati</taxon>
        <taxon>Pseudomonadota</taxon>
        <taxon>Gammaproteobacteria</taxon>
        <taxon>Enterobacterales</taxon>
        <taxon>Enterobacteriaceae</taxon>
        <taxon>Salmonella</taxon>
    </lineage>
</organism>
<gene>
    <name evidence="1" type="primary">aroA</name>
    <name type="ordered locus">SARI_01985</name>
</gene>
<reference key="1">
    <citation type="submission" date="2007-11" db="EMBL/GenBank/DDBJ databases">
        <authorList>
            <consortium name="The Salmonella enterica serovar Arizonae Genome Sequencing Project"/>
            <person name="McClelland M."/>
            <person name="Sanderson E.K."/>
            <person name="Porwollik S."/>
            <person name="Spieth J."/>
            <person name="Clifton W.S."/>
            <person name="Fulton R."/>
            <person name="Chunyan W."/>
            <person name="Wollam A."/>
            <person name="Shah N."/>
            <person name="Pepin K."/>
            <person name="Bhonagiri V."/>
            <person name="Nash W."/>
            <person name="Johnson M."/>
            <person name="Thiruvilangam P."/>
            <person name="Wilson R."/>
        </authorList>
    </citation>
    <scope>NUCLEOTIDE SEQUENCE [LARGE SCALE GENOMIC DNA]</scope>
    <source>
        <strain>ATCC BAA-731 / CDC346-86 / RSK2980</strain>
    </source>
</reference>
<dbReference type="EC" id="2.5.1.19" evidence="1"/>
<dbReference type="EMBL" id="CP000880">
    <property type="protein sequence ID" value="ABX21865.1"/>
    <property type="molecule type" value="Genomic_DNA"/>
</dbReference>
<dbReference type="SMR" id="A9MHX5"/>
<dbReference type="STRING" id="41514.SARI_01985"/>
<dbReference type="KEGG" id="ses:SARI_01985"/>
<dbReference type="HOGENOM" id="CLU_024321_0_0_6"/>
<dbReference type="UniPathway" id="UPA00053">
    <property type="reaction ID" value="UER00089"/>
</dbReference>
<dbReference type="Proteomes" id="UP000002084">
    <property type="component" value="Chromosome"/>
</dbReference>
<dbReference type="GO" id="GO:0005737">
    <property type="term" value="C:cytoplasm"/>
    <property type="evidence" value="ECO:0007669"/>
    <property type="project" value="UniProtKB-SubCell"/>
</dbReference>
<dbReference type="GO" id="GO:0003866">
    <property type="term" value="F:3-phosphoshikimate 1-carboxyvinyltransferase activity"/>
    <property type="evidence" value="ECO:0007669"/>
    <property type="project" value="UniProtKB-UniRule"/>
</dbReference>
<dbReference type="GO" id="GO:0008652">
    <property type="term" value="P:amino acid biosynthetic process"/>
    <property type="evidence" value="ECO:0007669"/>
    <property type="project" value="UniProtKB-KW"/>
</dbReference>
<dbReference type="GO" id="GO:0009073">
    <property type="term" value="P:aromatic amino acid family biosynthetic process"/>
    <property type="evidence" value="ECO:0007669"/>
    <property type="project" value="UniProtKB-KW"/>
</dbReference>
<dbReference type="GO" id="GO:0009423">
    <property type="term" value="P:chorismate biosynthetic process"/>
    <property type="evidence" value="ECO:0007669"/>
    <property type="project" value="UniProtKB-UniRule"/>
</dbReference>
<dbReference type="FunFam" id="3.65.10.10:FF:000003">
    <property type="entry name" value="3-phosphoshikimate 1-carboxyvinyltransferase"/>
    <property type="match status" value="1"/>
</dbReference>
<dbReference type="FunFam" id="3.65.10.10:FF:000004">
    <property type="entry name" value="3-phosphoshikimate 1-carboxyvinyltransferase"/>
    <property type="match status" value="1"/>
</dbReference>
<dbReference type="Gene3D" id="3.65.10.10">
    <property type="entry name" value="Enolpyruvate transferase domain"/>
    <property type="match status" value="2"/>
</dbReference>
<dbReference type="HAMAP" id="MF_00210">
    <property type="entry name" value="EPSP_synth"/>
    <property type="match status" value="1"/>
</dbReference>
<dbReference type="InterPro" id="IPR001986">
    <property type="entry name" value="Enolpyruvate_Tfrase_dom"/>
</dbReference>
<dbReference type="InterPro" id="IPR036968">
    <property type="entry name" value="Enolpyruvate_Tfrase_sf"/>
</dbReference>
<dbReference type="InterPro" id="IPR006264">
    <property type="entry name" value="EPSP_synthase"/>
</dbReference>
<dbReference type="InterPro" id="IPR023193">
    <property type="entry name" value="EPSP_synthase_CS"/>
</dbReference>
<dbReference type="InterPro" id="IPR013792">
    <property type="entry name" value="RNA3'P_cycl/enolpyr_Trfase_a/b"/>
</dbReference>
<dbReference type="NCBIfam" id="TIGR01356">
    <property type="entry name" value="aroA"/>
    <property type="match status" value="1"/>
</dbReference>
<dbReference type="PANTHER" id="PTHR21090">
    <property type="entry name" value="AROM/DEHYDROQUINATE SYNTHASE"/>
    <property type="match status" value="1"/>
</dbReference>
<dbReference type="PANTHER" id="PTHR21090:SF5">
    <property type="entry name" value="PENTAFUNCTIONAL AROM POLYPEPTIDE"/>
    <property type="match status" value="1"/>
</dbReference>
<dbReference type="Pfam" id="PF00275">
    <property type="entry name" value="EPSP_synthase"/>
    <property type="match status" value="1"/>
</dbReference>
<dbReference type="PIRSF" id="PIRSF000505">
    <property type="entry name" value="EPSPS"/>
    <property type="match status" value="1"/>
</dbReference>
<dbReference type="SUPFAM" id="SSF55205">
    <property type="entry name" value="EPT/RTPC-like"/>
    <property type="match status" value="1"/>
</dbReference>
<dbReference type="PROSITE" id="PS00104">
    <property type="entry name" value="EPSP_SYNTHASE_1"/>
    <property type="match status" value="1"/>
</dbReference>
<dbReference type="PROSITE" id="PS00885">
    <property type="entry name" value="EPSP_SYNTHASE_2"/>
    <property type="match status" value="1"/>
</dbReference>
<feature type="chain" id="PRO_1000077995" description="3-phosphoshikimate 1-carboxyvinyltransferase">
    <location>
        <begin position="1"/>
        <end position="427"/>
    </location>
</feature>
<feature type="active site" description="Proton acceptor" evidence="1">
    <location>
        <position position="313"/>
    </location>
</feature>
<feature type="binding site" evidence="1">
    <location>
        <position position="22"/>
    </location>
    <ligand>
        <name>3-phosphoshikimate</name>
        <dbReference type="ChEBI" id="CHEBI:145989"/>
    </ligand>
</feature>
<feature type="binding site" evidence="1">
    <location>
        <position position="22"/>
    </location>
    <ligand>
        <name>phosphoenolpyruvate</name>
        <dbReference type="ChEBI" id="CHEBI:58702"/>
    </ligand>
</feature>
<feature type="binding site" evidence="1">
    <location>
        <position position="23"/>
    </location>
    <ligand>
        <name>3-phosphoshikimate</name>
        <dbReference type="ChEBI" id="CHEBI:145989"/>
    </ligand>
</feature>
<feature type="binding site" evidence="1">
    <location>
        <position position="27"/>
    </location>
    <ligand>
        <name>3-phosphoshikimate</name>
        <dbReference type="ChEBI" id="CHEBI:145989"/>
    </ligand>
</feature>
<feature type="binding site" evidence="1">
    <location>
        <position position="96"/>
    </location>
    <ligand>
        <name>phosphoenolpyruvate</name>
        <dbReference type="ChEBI" id="CHEBI:58702"/>
    </ligand>
</feature>
<feature type="binding site" evidence="1">
    <location>
        <position position="124"/>
    </location>
    <ligand>
        <name>phosphoenolpyruvate</name>
        <dbReference type="ChEBI" id="CHEBI:58702"/>
    </ligand>
</feature>
<feature type="binding site" evidence="1">
    <location>
        <position position="169"/>
    </location>
    <ligand>
        <name>3-phosphoshikimate</name>
        <dbReference type="ChEBI" id="CHEBI:145989"/>
    </ligand>
</feature>
<feature type="binding site" evidence="1">
    <location>
        <position position="170"/>
    </location>
    <ligand>
        <name>3-phosphoshikimate</name>
        <dbReference type="ChEBI" id="CHEBI:145989"/>
    </ligand>
</feature>
<feature type="binding site" evidence="1">
    <location>
        <position position="171"/>
    </location>
    <ligand>
        <name>3-phosphoshikimate</name>
        <dbReference type="ChEBI" id="CHEBI:145989"/>
    </ligand>
</feature>
<feature type="binding site" evidence="1">
    <location>
        <position position="171"/>
    </location>
    <ligand>
        <name>phosphoenolpyruvate</name>
        <dbReference type="ChEBI" id="CHEBI:58702"/>
    </ligand>
</feature>
<feature type="binding site" evidence="1">
    <location>
        <position position="197"/>
    </location>
    <ligand>
        <name>3-phosphoshikimate</name>
        <dbReference type="ChEBI" id="CHEBI:145989"/>
    </ligand>
</feature>
<feature type="binding site" evidence="1">
    <location>
        <position position="313"/>
    </location>
    <ligand>
        <name>3-phosphoshikimate</name>
        <dbReference type="ChEBI" id="CHEBI:145989"/>
    </ligand>
</feature>
<feature type="binding site" evidence="1">
    <location>
        <position position="336"/>
    </location>
    <ligand>
        <name>3-phosphoshikimate</name>
        <dbReference type="ChEBI" id="CHEBI:145989"/>
    </ligand>
</feature>
<feature type="binding site" evidence="1">
    <location>
        <position position="340"/>
    </location>
    <ligand>
        <name>3-phosphoshikimate</name>
        <dbReference type="ChEBI" id="CHEBI:145989"/>
    </ligand>
</feature>
<feature type="binding site" evidence="1">
    <location>
        <position position="344"/>
    </location>
    <ligand>
        <name>phosphoenolpyruvate</name>
        <dbReference type="ChEBI" id="CHEBI:58702"/>
    </ligand>
</feature>
<feature type="binding site" evidence="1">
    <location>
        <position position="386"/>
    </location>
    <ligand>
        <name>phosphoenolpyruvate</name>
        <dbReference type="ChEBI" id="CHEBI:58702"/>
    </ligand>
</feature>
<feature type="binding site" evidence="1">
    <location>
        <position position="411"/>
    </location>
    <ligand>
        <name>phosphoenolpyruvate</name>
        <dbReference type="ChEBI" id="CHEBI:58702"/>
    </ligand>
</feature>
<accession>A9MHX5</accession>
<name>AROA_SALAR</name>
<sequence>MESLTLQPIARVDGAINLPGSKSVSNRALLLAALACGKTVLTNLLDSDDVRHMLNALSALGIDYTLSADRTRCDIIGNGGALRAPGDLELFLGNAGTAMRPLAAALCLGQNETVLTGEPRMKERPIGHLVDSLRQGGANIDYLEQENYPPLRLRGGFTGGDIEVDGSVSSQFLTALLMTAPLAPKDTIIRVKGELVSKPYIDITLNLMKTFGVEIMNHHYQQFVVKGGQQYHSPGRYLVEGDASSASYFLAAGAIKGGTVKVTGIGRKSMQGDIRFADVLEKMGATITWGDDFIACTRGELHAIDMDMNHIPDAAMTIATTALFAKGTTTLRNIYNWRVKETDRLFAMATELRKVGAEVEEGDDYIRITPPAKLHHADIGTYNDHRMAMCFSLVALSDTPVTILDPKCTAKTFPDYFEQLARISTPA</sequence>
<protein>
    <recommendedName>
        <fullName evidence="1">3-phosphoshikimate 1-carboxyvinyltransferase</fullName>
        <ecNumber evidence="1">2.5.1.19</ecNumber>
    </recommendedName>
    <alternativeName>
        <fullName evidence="1">5-enolpyruvylshikimate-3-phosphate synthase</fullName>
        <shortName evidence="1">EPSP synthase</shortName>
        <shortName evidence="1">EPSPS</shortName>
    </alternativeName>
</protein>